<keyword id="KW-0614">Plasmid</keyword>
<keyword id="KW-1185">Reference proteome</keyword>
<dbReference type="EMBL" id="U00090">
    <property type="protein sequence ID" value="AAB91767.1"/>
    <property type="molecule type" value="Genomic_DNA"/>
</dbReference>
<dbReference type="RefSeq" id="NP_443970.1">
    <property type="nucleotide sequence ID" value="NC_000914.2"/>
</dbReference>
<dbReference type="KEGG" id="rhi:NGR_a02550"/>
<dbReference type="PATRIC" id="fig|394.7.peg.265"/>
<dbReference type="eggNOG" id="ENOG502ZSGK">
    <property type="taxonomic scope" value="Bacteria"/>
</dbReference>
<dbReference type="HOGENOM" id="CLU_2452548_0_0_5"/>
<dbReference type="OrthoDB" id="8222298at2"/>
<dbReference type="Proteomes" id="UP000001054">
    <property type="component" value="Plasmid pNGR234a"/>
</dbReference>
<organism>
    <name type="scientific">Sinorhizobium fredii (strain NBRC 101917 / NGR234)</name>
    <dbReference type="NCBI Taxonomy" id="394"/>
    <lineage>
        <taxon>Bacteria</taxon>
        <taxon>Pseudomonadati</taxon>
        <taxon>Pseudomonadota</taxon>
        <taxon>Alphaproteobacteria</taxon>
        <taxon>Hyphomicrobiales</taxon>
        <taxon>Rhizobiaceae</taxon>
        <taxon>Sinorhizobium/Ensifer group</taxon>
        <taxon>Sinorhizobium</taxon>
    </lineage>
</organism>
<accession>P55563</accession>
<protein>
    <recommendedName>
        <fullName>Uncharacterized protein y4mD</fullName>
    </recommendedName>
</protein>
<sequence length="89" mass="9989">MWCGLLRPAEIALGAMAAGQPLKPLPKFYRSKMSPQSVLKCLPIGDEVVEVQRLVRWSWSLRQYANQRTRAVHHEHAAIIIVPHLGHAG</sequence>
<geneLocation type="plasmid">
    <name>sym pNGR234a</name>
</geneLocation>
<feature type="chain" id="PRO_0000200911" description="Uncharacterized protein y4mD">
    <location>
        <begin position="1"/>
        <end position="89"/>
    </location>
</feature>
<proteinExistence type="predicted"/>
<reference key="1">
    <citation type="journal article" date="1997" name="Nature">
        <title>Molecular basis of symbiosis between Rhizobium and legumes.</title>
        <authorList>
            <person name="Freiberg C.A."/>
            <person name="Fellay R."/>
            <person name="Bairoch A."/>
            <person name="Broughton W.J."/>
            <person name="Rosenthal A."/>
            <person name="Perret X."/>
        </authorList>
    </citation>
    <scope>NUCLEOTIDE SEQUENCE [LARGE SCALE GENOMIC DNA]</scope>
    <source>
        <strain>NBRC 101917 / NGR234</strain>
    </source>
</reference>
<reference key="2">
    <citation type="journal article" date="2009" name="Appl. Environ. Microbiol.">
        <title>Rhizobium sp. strain NGR234 possesses a remarkable number of secretion systems.</title>
        <authorList>
            <person name="Schmeisser C."/>
            <person name="Liesegang H."/>
            <person name="Krysciak D."/>
            <person name="Bakkou N."/>
            <person name="Le Quere A."/>
            <person name="Wollherr A."/>
            <person name="Heinemeyer I."/>
            <person name="Morgenstern B."/>
            <person name="Pommerening-Roeser A."/>
            <person name="Flores M."/>
            <person name="Palacios R."/>
            <person name="Brenner S."/>
            <person name="Gottschalk G."/>
            <person name="Schmitz R.A."/>
            <person name="Broughton W.J."/>
            <person name="Perret X."/>
            <person name="Strittmatter A.W."/>
            <person name="Streit W.R."/>
        </authorList>
    </citation>
    <scope>NUCLEOTIDE SEQUENCE [LARGE SCALE GENOMIC DNA]</scope>
    <source>
        <strain>NBRC 101917 / NGR234</strain>
    </source>
</reference>
<gene>
    <name type="ordered locus">NGR_a02550</name>
    <name type="ORF">y4mD</name>
</gene>
<name>Y4MD_SINFN</name>